<reference key="1">
    <citation type="journal article" date="2003" name="Lancet">
        <title>Genome sequence of Vibrio parahaemolyticus: a pathogenic mechanism distinct from that of V. cholerae.</title>
        <authorList>
            <person name="Makino K."/>
            <person name="Oshima K."/>
            <person name="Kurokawa K."/>
            <person name="Yokoyama K."/>
            <person name="Uda T."/>
            <person name="Tagomori K."/>
            <person name="Iijima Y."/>
            <person name="Najima M."/>
            <person name="Nakano M."/>
            <person name="Yamashita A."/>
            <person name="Kubota Y."/>
            <person name="Kimura S."/>
            <person name="Yasunaga T."/>
            <person name="Honda T."/>
            <person name="Shinagawa H."/>
            <person name="Hattori M."/>
            <person name="Iida T."/>
        </authorList>
    </citation>
    <scope>NUCLEOTIDE SEQUENCE [LARGE SCALE GENOMIC DNA]</scope>
    <source>
        <strain>RIMD 2210633</strain>
    </source>
</reference>
<evidence type="ECO:0000255" key="1">
    <source>
        <dbReference type="HAMAP-Rule" id="MF_00249"/>
    </source>
</evidence>
<accession>Q87T21</accession>
<organism>
    <name type="scientific">Vibrio parahaemolyticus serotype O3:K6 (strain RIMD 2210633)</name>
    <dbReference type="NCBI Taxonomy" id="223926"/>
    <lineage>
        <taxon>Bacteria</taxon>
        <taxon>Pseudomonadati</taxon>
        <taxon>Pseudomonadota</taxon>
        <taxon>Gammaproteobacteria</taxon>
        <taxon>Vibrionales</taxon>
        <taxon>Vibrionaceae</taxon>
        <taxon>Vibrio</taxon>
    </lineage>
</organism>
<keyword id="KW-0067">ATP-binding</keyword>
<keyword id="KW-0143">Chaperone</keyword>
<keyword id="KW-0963">Cytoplasm</keyword>
<keyword id="KW-0547">Nucleotide-binding</keyword>
<sequence length="443" mass="49880">MSEMTPREIVHELNRHIIGQDKAKRSVAIALRNRWRRMQLEESLRVEVTPKNILMIGPTGVGKTEIARRLAKLANAPFIKVEATKFTEVGYVGKEVETIIRDLTDVAVKMTHQQAMEKVKFRAEEQAEERILDALLPPARDSWGQVEQKEDTSNTRQIFRKKLREGQLDDKEIEIDVAAPQMGVEIMAPPGMEEMTNQLQGMFQNLAGDTKKKRKLKIKDAMKALAEEEAAKLVNQEELKEAAIFNVENNGIVFIDEIDKICKRGESSGPDVSREGVQRDLLPLIEGSTVSTKHGMVKTDHILFVASGAFQVAKPSDLIPELQGRLPIRVELEALSSNDFKRILTEPKASLTEQYIALMKTEDVDIEFTEDGITRIAEAAWTVNETTENIGARRLHTVMERLMDEISYDAAEQSGAKFVIDAAYVQARLGDTIEDEDLSRFIL</sequence>
<gene>
    <name evidence="1" type="primary">hslU</name>
    <name type="ordered locus">VP0249</name>
</gene>
<name>HSLU_VIBPA</name>
<proteinExistence type="inferred from homology"/>
<dbReference type="EMBL" id="BA000031">
    <property type="protein sequence ID" value="BAC58512.1"/>
    <property type="molecule type" value="Genomic_DNA"/>
</dbReference>
<dbReference type="RefSeq" id="NP_796628.1">
    <property type="nucleotide sequence ID" value="NC_004603.1"/>
</dbReference>
<dbReference type="RefSeq" id="WP_005457198.1">
    <property type="nucleotide sequence ID" value="NC_004603.1"/>
</dbReference>
<dbReference type="SMR" id="Q87T21"/>
<dbReference type="GeneID" id="1187716"/>
<dbReference type="KEGG" id="vpa:VP0249"/>
<dbReference type="PATRIC" id="fig|223926.6.peg.241"/>
<dbReference type="eggNOG" id="COG1220">
    <property type="taxonomic scope" value="Bacteria"/>
</dbReference>
<dbReference type="HOGENOM" id="CLU_033123_0_0_6"/>
<dbReference type="Proteomes" id="UP000002493">
    <property type="component" value="Chromosome 1"/>
</dbReference>
<dbReference type="GO" id="GO:0009376">
    <property type="term" value="C:HslUV protease complex"/>
    <property type="evidence" value="ECO:0007669"/>
    <property type="project" value="UniProtKB-UniRule"/>
</dbReference>
<dbReference type="GO" id="GO:0005524">
    <property type="term" value="F:ATP binding"/>
    <property type="evidence" value="ECO:0007669"/>
    <property type="project" value="UniProtKB-UniRule"/>
</dbReference>
<dbReference type="GO" id="GO:0016887">
    <property type="term" value="F:ATP hydrolysis activity"/>
    <property type="evidence" value="ECO:0007669"/>
    <property type="project" value="InterPro"/>
</dbReference>
<dbReference type="GO" id="GO:0008233">
    <property type="term" value="F:peptidase activity"/>
    <property type="evidence" value="ECO:0007669"/>
    <property type="project" value="InterPro"/>
</dbReference>
<dbReference type="GO" id="GO:0036402">
    <property type="term" value="F:proteasome-activating activity"/>
    <property type="evidence" value="ECO:0007669"/>
    <property type="project" value="UniProtKB-UniRule"/>
</dbReference>
<dbReference type="GO" id="GO:0043335">
    <property type="term" value="P:protein unfolding"/>
    <property type="evidence" value="ECO:0007669"/>
    <property type="project" value="UniProtKB-UniRule"/>
</dbReference>
<dbReference type="GO" id="GO:0051603">
    <property type="term" value="P:proteolysis involved in protein catabolic process"/>
    <property type="evidence" value="ECO:0007669"/>
    <property type="project" value="TreeGrafter"/>
</dbReference>
<dbReference type="CDD" id="cd19498">
    <property type="entry name" value="RecA-like_HslU"/>
    <property type="match status" value="1"/>
</dbReference>
<dbReference type="FunFam" id="1.10.8.10:FF:000028">
    <property type="entry name" value="ATP-dependent protease ATPase subunit HslU"/>
    <property type="match status" value="1"/>
</dbReference>
<dbReference type="FunFam" id="1.10.8.60:FF:000027">
    <property type="entry name" value="ATP-dependent protease ATPase subunit HslU"/>
    <property type="match status" value="1"/>
</dbReference>
<dbReference type="FunFam" id="3.40.50.300:FF:000213">
    <property type="entry name" value="ATP-dependent protease ATPase subunit HslU"/>
    <property type="match status" value="1"/>
</dbReference>
<dbReference type="FunFam" id="3.40.50.300:FF:000220">
    <property type="entry name" value="ATP-dependent protease ATPase subunit HslU"/>
    <property type="match status" value="1"/>
</dbReference>
<dbReference type="Gene3D" id="1.10.8.60">
    <property type="match status" value="1"/>
</dbReference>
<dbReference type="Gene3D" id="3.40.50.300">
    <property type="entry name" value="P-loop containing nucleotide triphosphate hydrolases"/>
    <property type="match status" value="2"/>
</dbReference>
<dbReference type="HAMAP" id="MF_00249">
    <property type="entry name" value="HslU"/>
    <property type="match status" value="1"/>
</dbReference>
<dbReference type="InterPro" id="IPR003593">
    <property type="entry name" value="AAA+_ATPase"/>
</dbReference>
<dbReference type="InterPro" id="IPR050052">
    <property type="entry name" value="ATP-dep_Clp_protease_ClpX"/>
</dbReference>
<dbReference type="InterPro" id="IPR003959">
    <property type="entry name" value="ATPase_AAA_core"/>
</dbReference>
<dbReference type="InterPro" id="IPR019489">
    <property type="entry name" value="Clp_ATPase_C"/>
</dbReference>
<dbReference type="InterPro" id="IPR004491">
    <property type="entry name" value="HslU"/>
</dbReference>
<dbReference type="InterPro" id="IPR027417">
    <property type="entry name" value="P-loop_NTPase"/>
</dbReference>
<dbReference type="NCBIfam" id="TIGR00390">
    <property type="entry name" value="hslU"/>
    <property type="match status" value="1"/>
</dbReference>
<dbReference type="NCBIfam" id="NF003544">
    <property type="entry name" value="PRK05201.1"/>
    <property type="match status" value="1"/>
</dbReference>
<dbReference type="PANTHER" id="PTHR48102">
    <property type="entry name" value="ATP-DEPENDENT CLP PROTEASE ATP-BINDING SUBUNIT CLPX-LIKE, MITOCHONDRIAL-RELATED"/>
    <property type="match status" value="1"/>
</dbReference>
<dbReference type="PANTHER" id="PTHR48102:SF3">
    <property type="entry name" value="ATP-DEPENDENT PROTEASE ATPASE SUBUNIT HSLU"/>
    <property type="match status" value="1"/>
</dbReference>
<dbReference type="Pfam" id="PF00004">
    <property type="entry name" value="AAA"/>
    <property type="match status" value="1"/>
</dbReference>
<dbReference type="Pfam" id="PF07724">
    <property type="entry name" value="AAA_2"/>
    <property type="match status" value="1"/>
</dbReference>
<dbReference type="SMART" id="SM00382">
    <property type="entry name" value="AAA"/>
    <property type="match status" value="1"/>
</dbReference>
<dbReference type="SMART" id="SM01086">
    <property type="entry name" value="ClpB_D2-small"/>
    <property type="match status" value="1"/>
</dbReference>
<dbReference type="SUPFAM" id="SSF52540">
    <property type="entry name" value="P-loop containing nucleoside triphosphate hydrolases"/>
    <property type="match status" value="1"/>
</dbReference>
<comment type="function">
    <text evidence="1">ATPase subunit of a proteasome-like degradation complex; this subunit has chaperone activity. The binding of ATP and its subsequent hydrolysis by HslU are essential for unfolding of protein substrates subsequently hydrolyzed by HslV. HslU recognizes the N-terminal part of its protein substrates and unfolds these before they are guided to HslV for hydrolysis.</text>
</comment>
<comment type="subunit">
    <text evidence="1">A double ring-shaped homohexamer of HslV is capped on each side by a ring-shaped HslU homohexamer. The assembly of the HslU/HslV complex is dependent on binding of ATP.</text>
</comment>
<comment type="subcellular location">
    <subcellularLocation>
        <location evidence="1">Cytoplasm</location>
    </subcellularLocation>
</comment>
<comment type="similarity">
    <text evidence="1">Belongs to the ClpX chaperone family. HslU subfamily.</text>
</comment>
<protein>
    <recommendedName>
        <fullName evidence="1">ATP-dependent protease ATPase subunit HslU</fullName>
    </recommendedName>
    <alternativeName>
        <fullName evidence="1">Unfoldase HslU</fullName>
    </alternativeName>
</protein>
<feature type="chain" id="PRO_0000160559" description="ATP-dependent protease ATPase subunit HslU">
    <location>
        <begin position="1"/>
        <end position="443"/>
    </location>
</feature>
<feature type="binding site" evidence="1">
    <location>
        <position position="18"/>
    </location>
    <ligand>
        <name>ATP</name>
        <dbReference type="ChEBI" id="CHEBI:30616"/>
    </ligand>
</feature>
<feature type="binding site" evidence="1">
    <location>
        <begin position="60"/>
        <end position="65"/>
    </location>
    <ligand>
        <name>ATP</name>
        <dbReference type="ChEBI" id="CHEBI:30616"/>
    </ligand>
</feature>
<feature type="binding site" evidence="1">
    <location>
        <position position="256"/>
    </location>
    <ligand>
        <name>ATP</name>
        <dbReference type="ChEBI" id="CHEBI:30616"/>
    </ligand>
</feature>
<feature type="binding site" evidence="1">
    <location>
        <position position="321"/>
    </location>
    <ligand>
        <name>ATP</name>
        <dbReference type="ChEBI" id="CHEBI:30616"/>
    </ligand>
</feature>
<feature type="binding site" evidence="1">
    <location>
        <position position="393"/>
    </location>
    <ligand>
        <name>ATP</name>
        <dbReference type="ChEBI" id="CHEBI:30616"/>
    </ligand>
</feature>